<organism>
    <name type="scientific">Escherichia coli O139:H28 (strain E24377A / ETEC)</name>
    <dbReference type="NCBI Taxonomy" id="331111"/>
    <lineage>
        <taxon>Bacteria</taxon>
        <taxon>Pseudomonadati</taxon>
        <taxon>Pseudomonadota</taxon>
        <taxon>Gammaproteobacteria</taxon>
        <taxon>Enterobacterales</taxon>
        <taxon>Enterobacteriaceae</taxon>
        <taxon>Escherichia</taxon>
    </lineage>
</organism>
<protein>
    <recommendedName>
        <fullName evidence="1">Small ribosomal subunit protein uS10</fullName>
    </recommendedName>
    <alternativeName>
        <fullName evidence="2">30S ribosomal protein S10</fullName>
    </alternativeName>
</protein>
<evidence type="ECO:0000255" key="1">
    <source>
        <dbReference type="HAMAP-Rule" id="MF_00508"/>
    </source>
</evidence>
<evidence type="ECO:0000305" key="2"/>
<accession>A7ZSL0</accession>
<gene>
    <name evidence="1" type="primary">rpsJ</name>
    <name type="ordered locus">EcE24377A_3804</name>
</gene>
<feature type="chain" id="PRO_1000060856" description="Small ribosomal subunit protein uS10">
    <location>
        <begin position="1"/>
        <end position="103"/>
    </location>
</feature>
<reference key="1">
    <citation type="journal article" date="2008" name="J. Bacteriol.">
        <title>The pangenome structure of Escherichia coli: comparative genomic analysis of E. coli commensal and pathogenic isolates.</title>
        <authorList>
            <person name="Rasko D.A."/>
            <person name="Rosovitz M.J."/>
            <person name="Myers G.S.A."/>
            <person name="Mongodin E.F."/>
            <person name="Fricke W.F."/>
            <person name="Gajer P."/>
            <person name="Crabtree J."/>
            <person name="Sebaihia M."/>
            <person name="Thomson N.R."/>
            <person name="Chaudhuri R."/>
            <person name="Henderson I.R."/>
            <person name="Sperandio V."/>
            <person name="Ravel J."/>
        </authorList>
    </citation>
    <scope>NUCLEOTIDE SEQUENCE [LARGE SCALE GENOMIC DNA]</scope>
    <source>
        <strain>E24377A / ETEC</strain>
    </source>
</reference>
<sequence>MQNQRIRIRLKAFDHRLIDQATAEIVETAKRTGAQVRGPIPLPTRKERFTVLISPHVNKDARDQYEIRTHLRLVDIVEPTEKTVDALMRLDLAAGVDVQISLG</sequence>
<keyword id="KW-1185">Reference proteome</keyword>
<keyword id="KW-0687">Ribonucleoprotein</keyword>
<keyword id="KW-0689">Ribosomal protein</keyword>
<name>RS10_ECO24</name>
<dbReference type="EMBL" id="CP000800">
    <property type="protein sequence ID" value="ABV20952.1"/>
    <property type="molecule type" value="Genomic_DNA"/>
</dbReference>
<dbReference type="RefSeq" id="WP_001181004.1">
    <property type="nucleotide sequence ID" value="NC_009801.1"/>
</dbReference>
<dbReference type="SMR" id="A7ZSL0"/>
<dbReference type="GeneID" id="93778666"/>
<dbReference type="KEGG" id="ecw:EcE24377A_3804"/>
<dbReference type="HOGENOM" id="CLU_122625_1_3_6"/>
<dbReference type="Proteomes" id="UP000001122">
    <property type="component" value="Chromosome"/>
</dbReference>
<dbReference type="GO" id="GO:1990904">
    <property type="term" value="C:ribonucleoprotein complex"/>
    <property type="evidence" value="ECO:0007669"/>
    <property type="project" value="UniProtKB-KW"/>
</dbReference>
<dbReference type="GO" id="GO:0005840">
    <property type="term" value="C:ribosome"/>
    <property type="evidence" value="ECO:0007669"/>
    <property type="project" value="UniProtKB-KW"/>
</dbReference>
<dbReference type="GO" id="GO:0003735">
    <property type="term" value="F:structural constituent of ribosome"/>
    <property type="evidence" value="ECO:0007669"/>
    <property type="project" value="InterPro"/>
</dbReference>
<dbReference type="GO" id="GO:0000049">
    <property type="term" value="F:tRNA binding"/>
    <property type="evidence" value="ECO:0007669"/>
    <property type="project" value="UniProtKB-UniRule"/>
</dbReference>
<dbReference type="GO" id="GO:0006412">
    <property type="term" value="P:translation"/>
    <property type="evidence" value="ECO:0007669"/>
    <property type="project" value="UniProtKB-UniRule"/>
</dbReference>
<dbReference type="FunFam" id="3.30.70.600:FF:000001">
    <property type="entry name" value="30S ribosomal protein S10"/>
    <property type="match status" value="1"/>
</dbReference>
<dbReference type="Gene3D" id="3.30.70.600">
    <property type="entry name" value="Ribosomal protein S10 domain"/>
    <property type="match status" value="1"/>
</dbReference>
<dbReference type="HAMAP" id="MF_00508">
    <property type="entry name" value="Ribosomal_uS10"/>
    <property type="match status" value="1"/>
</dbReference>
<dbReference type="InterPro" id="IPR001848">
    <property type="entry name" value="Ribosomal_uS10"/>
</dbReference>
<dbReference type="InterPro" id="IPR018268">
    <property type="entry name" value="Ribosomal_uS10_CS"/>
</dbReference>
<dbReference type="InterPro" id="IPR027486">
    <property type="entry name" value="Ribosomal_uS10_dom"/>
</dbReference>
<dbReference type="InterPro" id="IPR036838">
    <property type="entry name" value="Ribosomal_uS10_dom_sf"/>
</dbReference>
<dbReference type="NCBIfam" id="NF001861">
    <property type="entry name" value="PRK00596.1"/>
    <property type="match status" value="1"/>
</dbReference>
<dbReference type="NCBIfam" id="TIGR01049">
    <property type="entry name" value="rpsJ_bact"/>
    <property type="match status" value="1"/>
</dbReference>
<dbReference type="PANTHER" id="PTHR11700">
    <property type="entry name" value="30S RIBOSOMAL PROTEIN S10 FAMILY MEMBER"/>
    <property type="match status" value="1"/>
</dbReference>
<dbReference type="Pfam" id="PF00338">
    <property type="entry name" value="Ribosomal_S10"/>
    <property type="match status" value="1"/>
</dbReference>
<dbReference type="PRINTS" id="PR00971">
    <property type="entry name" value="RIBOSOMALS10"/>
</dbReference>
<dbReference type="SMART" id="SM01403">
    <property type="entry name" value="Ribosomal_S10"/>
    <property type="match status" value="1"/>
</dbReference>
<dbReference type="SUPFAM" id="SSF54999">
    <property type="entry name" value="Ribosomal protein S10"/>
    <property type="match status" value="1"/>
</dbReference>
<dbReference type="PROSITE" id="PS00361">
    <property type="entry name" value="RIBOSOMAL_S10"/>
    <property type="match status" value="1"/>
</dbReference>
<proteinExistence type="inferred from homology"/>
<comment type="function">
    <text evidence="1">Involved in the binding of tRNA to the ribosomes.</text>
</comment>
<comment type="subunit">
    <text evidence="1">Part of the 30S ribosomal subunit.</text>
</comment>
<comment type="similarity">
    <text evidence="1">Belongs to the universal ribosomal protein uS10 family.</text>
</comment>